<organism>
    <name type="scientific">Poecilia reticulata</name>
    <name type="common">Guppy</name>
    <name type="synonym">Acanthophacelus reticulatus</name>
    <dbReference type="NCBI Taxonomy" id="8081"/>
    <lineage>
        <taxon>Eukaryota</taxon>
        <taxon>Metazoa</taxon>
        <taxon>Chordata</taxon>
        <taxon>Craniata</taxon>
        <taxon>Vertebrata</taxon>
        <taxon>Euteleostomi</taxon>
        <taxon>Actinopterygii</taxon>
        <taxon>Neopterygii</taxon>
        <taxon>Teleostei</taxon>
        <taxon>Neoteleostei</taxon>
        <taxon>Acanthomorphata</taxon>
        <taxon>Ovalentaria</taxon>
        <taxon>Atherinomorphae</taxon>
        <taxon>Cyprinodontiformes</taxon>
        <taxon>Poeciliidae</taxon>
        <taxon>Poeciliinae</taxon>
        <taxon>Poecilia</taxon>
    </lineage>
</organism>
<dbReference type="EMBL" id="M81107">
    <property type="protein sequence ID" value="AAA49446.1"/>
    <property type="molecule type" value="Genomic_DNA"/>
</dbReference>
<dbReference type="PIR" id="PQ0234">
    <property type="entry name" value="PQ0234"/>
</dbReference>
<dbReference type="SMR" id="P26635"/>
<dbReference type="STRING" id="8081.ENSPREP00000004122"/>
<dbReference type="Proteomes" id="UP000242638">
    <property type="component" value="Unassembled WGS sequence"/>
</dbReference>
<dbReference type="GO" id="GO:0005634">
    <property type="term" value="C:nucleus"/>
    <property type="evidence" value="ECO:0007669"/>
    <property type="project" value="UniProtKB-SubCell"/>
</dbReference>
<dbReference type="GO" id="GO:0000981">
    <property type="term" value="F:DNA-binding transcription factor activity, RNA polymerase II-specific"/>
    <property type="evidence" value="ECO:0007669"/>
    <property type="project" value="TreeGrafter"/>
</dbReference>
<dbReference type="GO" id="GO:0000978">
    <property type="term" value="F:RNA polymerase II cis-regulatory region sequence-specific DNA binding"/>
    <property type="evidence" value="ECO:0007669"/>
    <property type="project" value="TreeGrafter"/>
</dbReference>
<dbReference type="GO" id="GO:0008270">
    <property type="term" value="F:zinc ion binding"/>
    <property type="evidence" value="ECO:0007669"/>
    <property type="project" value="UniProtKB-KW"/>
</dbReference>
<dbReference type="FunFam" id="3.30.160.60:FF:003460">
    <property type="entry name" value="Early growth response protein 1"/>
    <property type="match status" value="1"/>
</dbReference>
<dbReference type="FunFam" id="3.30.160.60:FF:000419">
    <property type="entry name" value="Early growth response protein 4"/>
    <property type="match status" value="1"/>
</dbReference>
<dbReference type="Gene3D" id="3.30.160.60">
    <property type="entry name" value="Classic Zinc Finger"/>
    <property type="match status" value="3"/>
</dbReference>
<dbReference type="InterPro" id="IPR036236">
    <property type="entry name" value="Znf_C2H2_sf"/>
</dbReference>
<dbReference type="InterPro" id="IPR013087">
    <property type="entry name" value="Znf_C2H2_type"/>
</dbReference>
<dbReference type="PANTHER" id="PTHR23235:SF54">
    <property type="entry name" value="E3 SUMO-PROTEIN LIGASE EGR2"/>
    <property type="match status" value="1"/>
</dbReference>
<dbReference type="PANTHER" id="PTHR23235">
    <property type="entry name" value="KRUEPPEL-LIKE TRANSCRIPTION FACTOR"/>
    <property type="match status" value="1"/>
</dbReference>
<dbReference type="Pfam" id="PF00096">
    <property type="entry name" value="zf-C2H2"/>
    <property type="match status" value="2"/>
</dbReference>
<dbReference type="SMART" id="SM00355">
    <property type="entry name" value="ZnF_C2H2"/>
    <property type="match status" value="2"/>
</dbReference>
<dbReference type="SUPFAM" id="SSF57667">
    <property type="entry name" value="beta-beta-alpha zinc fingers"/>
    <property type="match status" value="1"/>
</dbReference>
<dbReference type="PROSITE" id="PS00028">
    <property type="entry name" value="ZINC_FINGER_C2H2_1"/>
    <property type="match status" value="1"/>
</dbReference>
<dbReference type="PROSITE" id="PS50157">
    <property type="entry name" value="ZINC_FINGER_C2H2_2"/>
    <property type="match status" value="2"/>
</dbReference>
<accession>P26635</accession>
<evidence type="ECO:0000255" key="1">
    <source>
        <dbReference type="PROSITE-ProRule" id="PRU00042"/>
    </source>
</evidence>
<evidence type="ECO:0000305" key="2"/>
<keyword id="KW-0010">Activator</keyword>
<keyword id="KW-0238">DNA-binding</keyword>
<keyword id="KW-0479">Metal-binding</keyword>
<keyword id="KW-0539">Nucleus</keyword>
<keyword id="KW-1185">Reference proteome</keyword>
<keyword id="KW-0677">Repeat</keyword>
<keyword id="KW-0804">Transcription</keyword>
<keyword id="KW-0805">Transcription regulation</keyword>
<keyword id="KW-0862">Zinc</keyword>
<keyword id="KW-0863">Zinc-finger</keyword>
<comment type="function">
    <text>Sequence-specific DNA-binding transcription factor. Binds to two specific DNA sites located in the promoter region of HOXA4.</text>
</comment>
<comment type="subcellular location">
    <subcellularLocation>
        <location>Nucleus</location>
    </subcellularLocation>
</comment>
<comment type="similarity">
    <text evidence="2">Belongs to the EGR C2H2-type zinc-finger protein family.</text>
</comment>
<reference key="1">
    <citation type="journal article" date="1991" name="Biochem. Biophys. Res. Commun.">
        <title>Cloning of fish zinc-finger genes related to Krox-20 and Krox-24.</title>
        <authorList>
            <person name="Lanfear J."/>
            <person name="Jowett T."/>
            <person name="Holland P.W."/>
        </authorList>
    </citation>
    <scope>NUCLEOTIDE SEQUENCE [GENOMIC DNA]</scope>
</reference>
<proteinExistence type="inferred from homology"/>
<sequence length="62" mass="7247">AEGCDRGFSRSDELTRHIRIHTGHKPFQCRICMRNFSRSDHLTTHIRTHTGEKPFACDYCGR</sequence>
<name>EGR2_POERE</name>
<feature type="chain" id="PRO_0000047122" description="Early growth response protein 2">
    <location>
        <begin position="1" status="less than"/>
        <end position="62" status="greater than"/>
    </location>
</feature>
<feature type="zinc finger region" description="C2H2-type 1" evidence="1">
    <location>
        <begin position="1" status="less than"/>
        <end position="21"/>
    </location>
</feature>
<feature type="zinc finger region" description="C2H2-type 2" evidence="1">
    <location>
        <begin position="27"/>
        <end position="49"/>
    </location>
</feature>
<feature type="zinc finger region" description="C2H2-type 3" evidence="1">
    <location>
        <begin position="55"/>
        <end position="62" status="greater than"/>
    </location>
</feature>
<feature type="non-terminal residue">
    <location>
        <position position="1"/>
    </location>
</feature>
<feature type="non-terminal residue">
    <location>
        <position position="62"/>
    </location>
</feature>
<protein>
    <recommendedName>
        <fullName>Early growth response protein 2</fullName>
        <shortName>EGR-2</shortName>
    </recommendedName>
    <alternativeName>
        <fullName>Zinc finger protein Krox-20</fullName>
    </alternativeName>
</protein>
<gene>
    <name type="primary">egr2</name>
</gene>